<sequence length="314" mass="33653">MALVDETSIDEAGFRMSEATAGDFFALLKPRVMSLVVFTAFVGLVAAPVTINPLLAVIAILSIAIGAGASGALNMWYDADIDAVMTRTASRPVPSGRIQPHEALSFGLVLSVLSVMTLGVLVNWLSATLLAFTIFFYAVVYTMWLKRWTPQNIVIGGAAGAIPPVIGWAAVTGSVSLESIVLFLIIFLWTPPHFWALALFKSGDYERAGIPMMPNVAGHASTRRQIFAYALVLAPVGVAPWLLGYTTPFYGVAAMLLGLGFVWYAWKVLGMADDDRAMKPAKALFAYSLLYLFAIFAAYLADSVVERALAMGGA</sequence>
<organism>
    <name type="scientific">Mesorhizobium japonicum (strain LMG 29417 / CECT 9101 / MAFF 303099)</name>
    <name type="common">Mesorhizobium loti (strain MAFF 303099)</name>
    <dbReference type="NCBI Taxonomy" id="266835"/>
    <lineage>
        <taxon>Bacteria</taxon>
        <taxon>Pseudomonadati</taxon>
        <taxon>Pseudomonadota</taxon>
        <taxon>Alphaproteobacteria</taxon>
        <taxon>Hyphomicrobiales</taxon>
        <taxon>Phyllobacteriaceae</taxon>
        <taxon>Mesorhizobium</taxon>
    </lineage>
</organism>
<protein>
    <recommendedName>
        <fullName evidence="1">Protoheme IX farnesyltransferase 2</fullName>
        <ecNumber evidence="1">2.5.1.141</ecNumber>
    </recommendedName>
    <alternativeName>
        <fullName evidence="1">Heme B farnesyltransferase 2</fullName>
    </alternativeName>
    <alternativeName>
        <fullName evidence="1">Heme O synthase 2</fullName>
    </alternativeName>
</protein>
<accession>Q985X0</accession>
<gene>
    <name evidence="1" type="primary">ctaB2</name>
    <name type="ordered locus">mlr7493</name>
</gene>
<dbReference type="EC" id="2.5.1.141" evidence="1"/>
<dbReference type="EMBL" id="BA000012">
    <property type="protein sequence ID" value="BAB53583.1"/>
    <property type="molecule type" value="Genomic_DNA"/>
</dbReference>
<dbReference type="RefSeq" id="WP_010914890.1">
    <property type="nucleotide sequence ID" value="NC_002678.2"/>
</dbReference>
<dbReference type="SMR" id="Q985X0"/>
<dbReference type="KEGG" id="mlo:mlr7493"/>
<dbReference type="PATRIC" id="fig|266835.9.peg.5986"/>
<dbReference type="eggNOG" id="COG0109">
    <property type="taxonomic scope" value="Bacteria"/>
</dbReference>
<dbReference type="HOGENOM" id="CLU_029631_0_2_5"/>
<dbReference type="UniPathway" id="UPA00834">
    <property type="reaction ID" value="UER00712"/>
</dbReference>
<dbReference type="Proteomes" id="UP000000552">
    <property type="component" value="Chromosome"/>
</dbReference>
<dbReference type="GO" id="GO:0005886">
    <property type="term" value="C:plasma membrane"/>
    <property type="evidence" value="ECO:0007669"/>
    <property type="project" value="UniProtKB-SubCell"/>
</dbReference>
<dbReference type="GO" id="GO:0008495">
    <property type="term" value="F:protoheme IX farnesyltransferase activity"/>
    <property type="evidence" value="ECO:0007669"/>
    <property type="project" value="UniProtKB-UniRule"/>
</dbReference>
<dbReference type="GO" id="GO:0048034">
    <property type="term" value="P:heme O biosynthetic process"/>
    <property type="evidence" value="ECO:0007669"/>
    <property type="project" value="UniProtKB-UniRule"/>
</dbReference>
<dbReference type="CDD" id="cd13957">
    <property type="entry name" value="PT_UbiA_Cox10"/>
    <property type="match status" value="1"/>
</dbReference>
<dbReference type="FunFam" id="1.10.357.140:FF:000001">
    <property type="entry name" value="Protoheme IX farnesyltransferase"/>
    <property type="match status" value="1"/>
</dbReference>
<dbReference type="Gene3D" id="1.10.357.140">
    <property type="entry name" value="UbiA prenyltransferase"/>
    <property type="match status" value="1"/>
</dbReference>
<dbReference type="HAMAP" id="MF_00154">
    <property type="entry name" value="CyoE_CtaB"/>
    <property type="match status" value="1"/>
</dbReference>
<dbReference type="InterPro" id="IPR006369">
    <property type="entry name" value="Protohaem_IX_farnesylTrfase"/>
</dbReference>
<dbReference type="InterPro" id="IPR000537">
    <property type="entry name" value="UbiA_prenyltransferase"/>
</dbReference>
<dbReference type="InterPro" id="IPR030470">
    <property type="entry name" value="UbiA_prenylTrfase_CS"/>
</dbReference>
<dbReference type="InterPro" id="IPR044878">
    <property type="entry name" value="UbiA_sf"/>
</dbReference>
<dbReference type="NCBIfam" id="TIGR01473">
    <property type="entry name" value="cyoE_ctaB"/>
    <property type="match status" value="1"/>
</dbReference>
<dbReference type="NCBIfam" id="NF003349">
    <property type="entry name" value="PRK04375.1-2"/>
    <property type="match status" value="1"/>
</dbReference>
<dbReference type="PANTHER" id="PTHR43448:SF7">
    <property type="entry name" value="4-HYDROXYBENZOATE SOLANESYLTRANSFERASE"/>
    <property type="match status" value="1"/>
</dbReference>
<dbReference type="PANTHER" id="PTHR43448">
    <property type="entry name" value="PROTOHEME IX FARNESYLTRANSFERASE, MITOCHONDRIAL"/>
    <property type="match status" value="1"/>
</dbReference>
<dbReference type="Pfam" id="PF01040">
    <property type="entry name" value="UbiA"/>
    <property type="match status" value="1"/>
</dbReference>
<dbReference type="PROSITE" id="PS00943">
    <property type="entry name" value="UBIA"/>
    <property type="match status" value="1"/>
</dbReference>
<evidence type="ECO:0000255" key="1">
    <source>
        <dbReference type="HAMAP-Rule" id="MF_00154"/>
    </source>
</evidence>
<keyword id="KW-0997">Cell inner membrane</keyword>
<keyword id="KW-1003">Cell membrane</keyword>
<keyword id="KW-0350">Heme biosynthesis</keyword>
<keyword id="KW-0472">Membrane</keyword>
<keyword id="KW-0808">Transferase</keyword>
<keyword id="KW-0812">Transmembrane</keyword>
<keyword id="KW-1133">Transmembrane helix</keyword>
<proteinExistence type="inferred from homology"/>
<reference key="1">
    <citation type="journal article" date="2000" name="DNA Res.">
        <title>Complete genome structure of the nitrogen-fixing symbiotic bacterium Mesorhizobium loti.</title>
        <authorList>
            <person name="Kaneko T."/>
            <person name="Nakamura Y."/>
            <person name="Sato S."/>
            <person name="Asamizu E."/>
            <person name="Kato T."/>
            <person name="Sasamoto S."/>
            <person name="Watanabe A."/>
            <person name="Idesawa K."/>
            <person name="Ishikawa A."/>
            <person name="Kawashima K."/>
            <person name="Kimura T."/>
            <person name="Kishida Y."/>
            <person name="Kiyokawa C."/>
            <person name="Kohara M."/>
            <person name="Matsumoto M."/>
            <person name="Matsuno A."/>
            <person name="Mochizuki Y."/>
            <person name="Nakayama S."/>
            <person name="Nakazaki N."/>
            <person name="Shimpo S."/>
            <person name="Sugimoto M."/>
            <person name="Takeuchi C."/>
            <person name="Yamada M."/>
            <person name="Tabata S."/>
        </authorList>
    </citation>
    <scope>NUCLEOTIDE SEQUENCE [LARGE SCALE GENOMIC DNA]</scope>
    <source>
        <strain>LMG 29417 / CECT 9101 / MAFF 303099</strain>
    </source>
</reference>
<feature type="chain" id="PRO_0000327132" description="Protoheme IX farnesyltransferase 2">
    <location>
        <begin position="1"/>
        <end position="314"/>
    </location>
</feature>
<feature type="transmembrane region" description="Helical" evidence="1">
    <location>
        <begin position="32"/>
        <end position="49"/>
    </location>
</feature>
<feature type="transmembrane region" description="Helical" evidence="1">
    <location>
        <begin position="54"/>
        <end position="76"/>
    </location>
</feature>
<feature type="transmembrane region" description="Helical" evidence="1">
    <location>
        <begin position="98"/>
        <end position="118"/>
    </location>
</feature>
<feature type="transmembrane region" description="Helical" evidence="1">
    <location>
        <begin position="120"/>
        <end position="140"/>
    </location>
</feature>
<feature type="transmembrane region" description="Helical" evidence="1">
    <location>
        <begin position="153"/>
        <end position="173"/>
    </location>
</feature>
<feature type="transmembrane region" description="Helical" evidence="1">
    <location>
        <begin position="180"/>
        <end position="200"/>
    </location>
</feature>
<feature type="transmembrane region" description="Helical" evidence="1">
    <location>
        <begin position="226"/>
        <end position="246"/>
    </location>
</feature>
<feature type="transmembrane region" description="Helical" evidence="1">
    <location>
        <begin position="249"/>
        <end position="269"/>
    </location>
</feature>
<feature type="transmembrane region" description="Helical" evidence="1">
    <location>
        <begin position="285"/>
        <end position="305"/>
    </location>
</feature>
<name>COXX2_RHILO</name>
<comment type="function">
    <text evidence="1">Converts heme B (protoheme IX) to heme O by substitution of the vinyl group on carbon 2 of heme B porphyrin ring with a hydroxyethyl farnesyl side group.</text>
</comment>
<comment type="catalytic activity">
    <reaction evidence="1">
        <text>heme b + (2E,6E)-farnesyl diphosphate + H2O = Fe(II)-heme o + diphosphate</text>
        <dbReference type="Rhea" id="RHEA:28070"/>
        <dbReference type="ChEBI" id="CHEBI:15377"/>
        <dbReference type="ChEBI" id="CHEBI:33019"/>
        <dbReference type="ChEBI" id="CHEBI:60344"/>
        <dbReference type="ChEBI" id="CHEBI:60530"/>
        <dbReference type="ChEBI" id="CHEBI:175763"/>
        <dbReference type="EC" id="2.5.1.141"/>
    </reaction>
</comment>
<comment type="pathway">
    <text evidence="1">Porphyrin-containing compound metabolism; heme O biosynthesis; heme O from protoheme: step 1/1.</text>
</comment>
<comment type="subcellular location">
    <subcellularLocation>
        <location evidence="1">Cell inner membrane</location>
        <topology evidence="1">Multi-pass membrane protein</topology>
    </subcellularLocation>
</comment>
<comment type="miscellaneous">
    <text evidence="1">Carbon 2 of the heme B porphyrin ring is defined according to the Fischer nomenclature.</text>
</comment>
<comment type="similarity">
    <text evidence="1">Belongs to the UbiA prenyltransferase family. Protoheme IX farnesyltransferase subfamily.</text>
</comment>